<feature type="chain" id="PRO_0000196868" description="Uncharacterized mitochondrial protein ORF6">
    <location>
        <begin position="1"/>
        <end position="178"/>
    </location>
</feature>
<reference key="1">
    <citation type="journal article" date="1990" name="Nucleic Acids Res.">
        <title>Nucleotide sequence of the mitochondrial genome of Paramecium.</title>
        <authorList>
            <person name="Pritchard A.E."/>
            <person name="Seilhamer J.J."/>
            <person name="Mahalingam R."/>
            <person name="Sable C.L."/>
            <person name="Venuti S.E."/>
            <person name="Cummings D.J."/>
        </authorList>
    </citation>
    <scope>NUCLEOTIDE SEQUENCE [GENOMIC DNA]</scope>
    <source>
        <strain>Stock 51</strain>
    </source>
</reference>
<keyword id="KW-0496">Mitochondrion</keyword>
<organism>
    <name type="scientific">Paramecium tetraurelia</name>
    <dbReference type="NCBI Taxonomy" id="5888"/>
    <lineage>
        <taxon>Eukaryota</taxon>
        <taxon>Sar</taxon>
        <taxon>Alveolata</taxon>
        <taxon>Ciliophora</taxon>
        <taxon>Intramacronucleata</taxon>
        <taxon>Oligohymenophorea</taxon>
        <taxon>Peniculida</taxon>
        <taxon>Parameciidae</taxon>
        <taxon>Paramecium</taxon>
    </lineage>
</organism>
<sequence length="178" mass="20791">MRRAFIELDRVKGCFFRRGKRKAKKLNSSGAFAFGSSYAGTYLLDKHSRRKNNLYLRSFFFFKFYYCNLFNFNPGFIGAFYHTRPGVFFLDHFFFFNNFLEIPSFFENAAEAEPAQLMGHLVQDCAAQTTGRGLVNFERGLVDSKPKFLDAFFGLLSLKRTTNRFGILFFLIFCLRRA</sequence>
<protein>
    <recommendedName>
        <fullName>Uncharacterized mitochondrial protein ORF6</fullName>
    </recommendedName>
</protein>
<dbReference type="EMBL" id="X15917">
    <property type="protein sequence ID" value="CAA34046.1"/>
    <property type="molecule type" value="Genomic_DNA"/>
</dbReference>
<dbReference type="PIR" id="S07737">
    <property type="entry name" value="S07737"/>
</dbReference>
<dbReference type="GO" id="GO:0005739">
    <property type="term" value="C:mitochondrion"/>
    <property type="evidence" value="ECO:0007669"/>
    <property type="project" value="UniProtKB-SubCell"/>
</dbReference>
<evidence type="ECO:0000305" key="1"/>
<name>YM06_PARTE</name>
<proteinExistence type="predicted"/>
<comment type="subcellular location">
    <subcellularLocation>
        <location evidence="1">Mitochondrion</location>
    </subcellularLocation>
</comment>
<geneLocation type="mitochondrion"/>
<accession>P15607</accession>